<keyword id="KW-0275">Fatty acid biosynthesis</keyword>
<keyword id="KW-0276">Fatty acid metabolism</keyword>
<keyword id="KW-0349">Heme</keyword>
<keyword id="KW-0408">Iron</keyword>
<keyword id="KW-0444">Lipid biosynthesis</keyword>
<keyword id="KW-0443">Lipid metabolism</keyword>
<keyword id="KW-0456">Lyase</keyword>
<keyword id="KW-0479">Metal-binding</keyword>
<keyword id="KW-0925">Oxylipin biosynthesis</keyword>
<keyword id="KW-1185">Reference proteome</keyword>
<name>C74M1_SELML</name>
<dbReference type="EC" id="4.2.1.183" evidence="2"/>
<dbReference type="EMBL" id="GL377605">
    <property type="protein sequence ID" value="EFJ19674.1"/>
    <property type="molecule type" value="Genomic_DNA"/>
</dbReference>
<dbReference type="STRING" id="88036.D8S724"/>
<dbReference type="EnsemblPlants" id="EFJ19674">
    <property type="protein sequence ID" value="EFJ19674"/>
    <property type="gene ID" value="SELMODRAFT_177485"/>
</dbReference>
<dbReference type="GeneID" id="9660714"/>
<dbReference type="Gramene" id="EFJ19674">
    <property type="protein sequence ID" value="EFJ19674"/>
    <property type="gene ID" value="SELMODRAFT_177485"/>
</dbReference>
<dbReference type="KEGG" id="smo:SELMODRAFT_177485"/>
<dbReference type="eggNOG" id="ENOG502QQNS">
    <property type="taxonomic scope" value="Eukaryota"/>
</dbReference>
<dbReference type="HOGENOM" id="CLU_045757_0_0_1"/>
<dbReference type="InParanoid" id="D8S724"/>
<dbReference type="OMA" id="HESAFQV"/>
<dbReference type="OrthoDB" id="447408at2759"/>
<dbReference type="BioCyc" id="MetaCyc:MONOMER-20529"/>
<dbReference type="BRENDA" id="4.2.1.B6">
    <property type="organism ID" value="9844"/>
</dbReference>
<dbReference type="UniPathway" id="UPA00382"/>
<dbReference type="Proteomes" id="UP000001514">
    <property type="component" value="Unassembled WGS sequence"/>
</dbReference>
<dbReference type="GO" id="GO:0020037">
    <property type="term" value="F:heme binding"/>
    <property type="evidence" value="ECO:0007669"/>
    <property type="project" value="InterPro"/>
</dbReference>
<dbReference type="GO" id="GO:0016836">
    <property type="term" value="F:hydro-lyase activity"/>
    <property type="evidence" value="ECO:0000314"/>
    <property type="project" value="UniProtKB"/>
</dbReference>
<dbReference type="GO" id="GO:0005506">
    <property type="term" value="F:iron ion binding"/>
    <property type="evidence" value="ECO:0007669"/>
    <property type="project" value="InterPro"/>
</dbReference>
<dbReference type="GO" id="GO:0004497">
    <property type="term" value="F:monooxygenase activity"/>
    <property type="evidence" value="ECO:0000318"/>
    <property type="project" value="GO_Central"/>
</dbReference>
<dbReference type="GO" id="GO:0016705">
    <property type="term" value="F:oxidoreductase activity, acting on paired donors, with incorporation or reduction of molecular oxygen"/>
    <property type="evidence" value="ECO:0007669"/>
    <property type="project" value="InterPro"/>
</dbReference>
<dbReference type="GO" id="GO:0006633">
    <property type="term" value="P:fatty acid biosynthetic process"/>
    <property type="evidence" value="ECO:0007669"/>
    <property type="project" value="UniProtKB-KW"/>
</dbReference>
<dbReference type="GO" id="GO:0031408">
    <property type="term" value="P:oxylipin biosynthetic process"/>
    <property type="evidence" value="ECO:0000314"/>
    <property type="project" value="UniProtKB"/>
</dbReference>
<dbReference type="CDD" id="cd11071">
    <property type="entry name" value="CYP74"/>
    <property type="match status" value="1"/>
</dbReference>
<dbReference type="FunFam" id="1.10.630.10:FF:000024">
    <property type="entry name" value="Allene oxide synthase, chloroplastic"/>
    <property type="match status" value="1"/>
</dbReference>
<dbReference type="Gene3D" id="1.10.630.10">
    <property type="entry name" value="Cytochrome P450"/>
    <property type="match status" value="1"/>
</dbReference>
<dbReference type="InterPro" id="IPR001128">
    <property type="entry name" value="Cyt_P450"/>
</dbReference>
<dbReference type="InterPro" id="IPR002403">
    <property type="entry name" value="Cyt_P450_E_grp-IV"/>
</dbReference>
<dbReference type="InterPro" id="IPR036396">
    <property type="entry name" value="Cyt_P450_sf"/>
</dbReference>
<dbReference type="PANTHER" id="PTHR24286:SF255">
    <property type="entry name" value="ALLENE OXIDE SYNTHASE, CHLOROPLASTIC"/>
    <property type="match status" value="1"/>
</dbReference>
<dbReference type="PANTHER" id="PTHR24286">
    <property type="entry name" value="CYTOCHROME P450 26"/>
    <property type="match status" value="1"/>
</dbReference>
<dbReference type="Pfam" id="PF00067">
    <property type="entry name" value="p450"/>
    <property type="match status" value="1"/>
</dbReference>
<dbReference type="PRINTS" id="PR00465">
    <property type="entry name" value="EP450IV"/>
</dbReference>
<dbReference type="SUPFAM" id="SSF48264">
    <property type="entry name" value="Cytochrome P450"/>
    <property type="match status" value="1"/>
</dbReference>
<reference key="1">
    <citation type="journal article" date="2011" name="Science">
        <title>The Selaginella genome identifies genetic changes associated with the evolution of vascular plants.</title>
        <authorList>
            <person name="Banks J.A."/>
            <person name="Nishiyama T."/>
            <person name="Hasebe M."/>
            <person name="Bowman J.L."/>
            <person name="Gribskov M."/>
            <person name="dePamphilis C."/>
            <person name="Albert V.A."/>
            <person name="Aono N."/>
            <person name="Aoyama T."/>
            <person name="Ambrose B.A."/>
            <person name="Ashton N.W."/>
            <person name="Axtell M.J."/>
            <person name="Barker E."/>
            <person name="Barker M.S."/>
            <person name="Bennetzen J.L."/>
            <person name="Bonawitz N.D."/>
            <person name="Chapple C."/>
            <person name="Cheng C."/>
            <person name="Correa L.G."/>
            <person name="Dacre M."/>
            <person name="DeBarry J."/>
            <person name="Dreyer I."/>
            <person name="Elias M."/>
            <person name="Engstrom E.M."/>
            <person name="Estelle M."/>
            <person name="Feng L."/>
            <person name="Finet C."/>
            <person name="Floyd S.K."/>
            <person name="Frommer W.B."/>
            <person name="Fujita T."/>
            <person name="Gramzow L."/>
            <person name="Gutensohn M."/>
            <person name="Harholt J."/>
            <person name="Hattori M."/>
            <person name="Heyl A."/>
            <person name="Hirai T."/>
            <person name="Hiwatashi Y."/>
            <person name="Ishikawa M."/>
            <person name="Iwata M."/>
            <person name="Karol K.G."/>
            <person name="Koehler B."/>
            <person name="Kolukisaoglu U."/>
            <person name="Kubo M."/>
            <person name="Kurata T."/>
            <person name="Lalonde S."/>
            <person name="Li K."/>
            <person name="Li Y."/>
            <person name="Litt A."/>
            <person name="Lyons E."/>
            <person name="Manning G."/>
            <person name="Maruyama T."/>
            <person name="Michael T.P."/>
            <person name="Mikami K."/>
            <person name="Miyazaki S."/>
            <person name="Morinaga S."/>
            <person name="Murata T."/>
            <person name="Mueller-Roeber B."/>
            <person name="Nelson D.R."/>
            <person name="Obara M."/>
            <person name="Oguri Y."/>
            <person name="Olmstead R.G."/>
            <person name="Onodera N."/>
            <person name="Petersen B.L."/>
            <person name="Pils B."/>
            <person name="Prigge M."/>
            <person name="Rensing S.A."/>
            <person name="Riano-Pachon D.M."/>
            <person name="Roberts A.W."/>
            <person name="Sato Y."/>
            <person name="Scheller H.V."/>
            <person name="Schulz B."/>
            <person name="Schulz C."/>
            <person name="Shakirov E.V."/>
            <person name="Shibagaki N."/>
            <person name="Shinohara N."/>
            <person name="Shippen D.E."/>
            <person name="Soerensen I."/>
            <person name="Sotooka R."/>
            <person name="Sugimoto N."/>
            <person name="Sugita M."/>
            <person name="Sumikawa N."/>
            <person name="Tanurdzic M."/>
            <person name="Theissen G."/>
            <person name="Ulvskov P."/>
            <person name="Wakazuki S."/>
            <person name="Weng J.K."/>
            <person name="Willats W.W."/>
            <person name="Wipf D."/>
            <person name="Wolf P.G."/>
            <person name="Yang L."/>
            <person name="Zimmer A.D."/>
            <person name="Zhu Q."/>
            <person name="Mitros T."/>
            <person name="Hellsten U."/>
            <person name="Loque D."/>
            <person name="Otillar R."/>
            <person name="Salamov A."/>
            <person name="Schmutz J."/>
            <person name="Shapiro H."/>
            <person name="Lindquist E."/>
            <person name="Lucas S."/>
            <person name="Rokhsar D."/>
            <person name="Grigoriev I.V."/>
        </authorList>
    </citation>
    <scope>NUCLEOTIDE SEQUENCE [LARGE SCALE GENOMIC DNA]</scope>
</reference>
<reference key="2">
    <citation type="journal article" date="2016" name="Biochim. Biophys. Acta">
        <title>Oxylipin biosynthesis in spikemoss Selaginella moellendorffii: Molecular cloning and identification of divinyl ether synthases CYP74M1 and CYP74M3.</title>
        <authorList>
            <person name="Gorina S.S."/>
            <person name="Toporkova Y.Y."/>
            <person name="Mukhtarova L.S."/>
            <person name="Smirnova E.O."/>
            <person name="Chechetkin I.R."/>
            <person name="Khairutdinov B.I."/>
            <person name="Gogolev Y.V."/>
            <person name="Grechkin A.N."/>
        </authorList>
    </citation>
    <scope>FUNCTION</scope>
    <scope>CATALYTIC ACTIVITY</scope>
    <scope>BIOPHYSICOCHEMICAL PROPERTIES</scope>
    <scope>PATHWAY</scope>
</reference>
<protein>
    <recommendedName>
        <fullName evidence="3">Divinyl ether synthase CYP74M1</fullName>
    </recommendedName>
    <alternativeName>
        <fullName evidence="5">Etheroleic acid synthase CYP74M1</fullName>
        <ecNumber evidence="2">4.2.1.183</ecNumber>
    </alternativeName>
</protein>
<comment type="function">
    <text evidence="2">Divinyl ether synthase involved in oxylipin biosynthesis (PubMed:26776054). Catalyzes the conversion of (13S)-hydroperoxy-(9Z,11E)-octadecadienoate (13-HPOD) to etheroleate and (13S)-hydroperoxy-(9Z,11E,15Z)-octadecatrienoate (13-HPOT) to etherolenate (PubMed:26776054). Has no activity with the corresponding 9-hydroperoxides (9-HPOD and 9-HPOT) (PubMed:26776054).</text>
</comment>
<comment type="catalytic activity">
    <reaction evidence="2">
        <text>(13S)-hydroperoxy-(9Z,11E)-octadecadienoate = etheroleate + H2O</text>
        <dbReference type="Rhea" id="RHEA:79275"/>
        <dbReference type="ChEBI" id="CHEBI:15377"/>
        <dbReference type="ChEBI" id="CHEBI:57466"/>
        <dbReference type="ChEBI" id="CHEBI:229759"/>
        <dbReference type="EC" id="4.2.1.183"/>
    </reaction>
    <physiologicalReaction direction="left-to-right" evidence="5">
        <dbReference type="Rhea" id="RHEA:79276"/>
    </physiologicalReaction>
</comment>
<comment type="catalytic activity">
    <reaction evidence="2">
        <text>(13S)-hydroperoxy-(9Z,11E,15Z)-octadecatrienoate = etherolenate + H2O</text>
        <dbReference type="Rhea" id="RHEA:79271"/>
        <dbReference type="ChEBI" id="CHEBI:15377"/>
        <dbReference type="ChEBI" id="CHEBI:58757"/>
        <dbReference type="ChEBI" id="CHEBI:229758"/>
        <dbReference type="EC" id="4.2.1.183"/>
    </reaction>
    <physiologicalReaction direction="left-to-right" evidence="5">
        <dbReference type="Rhea" id="RHEA:79272"/>
    </physiologicalReaction>
</comment>
<comment type="cofactor">
    <cofactor evidence="1">
        <name>heme</name>
        <dbReference type="ChEBI" id="CHEBI:30413"/>
    </cofactor>
</comment>
<comment type="biophysicochemical properties">
    <kinetics>
        <KM evidence="2">70.3 uM for (13S)-hydroperoxy-(9Z,11E)-octadecadienoate</KM>
        <KM evidence="2">11.4 uM for (13S)-hydroperoxy-(9Z,11E,15Z)-octadecatrienoate</KM>
        <text evidence="2">kcat is 261.1 sec(-1) with (13S)-hydroperoxy-(9Z,11E)-octadecadienoate as substrate (PubMed:26776054). kcat is 185.3 sec(-1) with (13S)-hydroperoxy-(9Z,11E,15Z)-octadecatrienoate as substrate (PubMed:26776054).</text>
    </kinetics>
</comment>
<comment type="pathway">
    <text evidence="2">Lipid metabolism; oxylipin biosynthesis.</text>
</comment>
<comment type="similarity">
    <text evidence="4">Belongs to the cytochrome P450 family.</text>
</comment>
<evidence type="ECO:0000250" key="1">
    <source>
        <dbReference type="UniProtKB" id="Q96242"/>
    </source>
</evidence>
<evidence type="ECO:0000269" key="2">
    <source>
    </source>
</evidence>
<evidence type="ECO:0000303" key="3">
    <source>
    </source>
</evidence>
<evidence type="ECO:0000305" key="4"/>
<evidence type="ECO:0000305" key="5">
    <source>
    </source>
</evidence>
<evidence type="ECO:0000312" key="6">
    <source>
        <dbReference type="EMBL" id="EFJ19674.1"/>
    </source>
</evidence>
<organism>
    <name type="scientific">Selaginella moellendorffii</name>
    <name type="common">Spikemoss</name>
    <dbReference type="NCBI Taxonomy" id="88036"/>
    <lineage>
        <taxon>Eukaryota</taxon>
        <taxon>Viridiplantae</taxon>
        <taxon>Streptophyta</taxon>
        <taxon>Embryophyta</taxon>
        <taxon>Tracheophyta</taxon>
        <taxon>Lycopodiopsida</taxon>
        <taxon>Selaginellales</taxon>
        <taxon>Selaginellaceae</taxon>
        <taxon>Selaginella</taxon>
    </lineage>
</organism>
<sequence>MSASGKEKPLKDVPGSYGVPVVGALKDRLDFYWFQGEVEFYKSRMEKNQSTVFRVNFPPGPPGFPEGHGIVLLDQVSYSVLLDNAKVDKRDTLIGSYMPDLAFTGGYRTLPYLDTAEEKHTTYKSLMFEILHESAQRFGPELSSAFDRTAQEWEAKIAKDGSVESLSTAGNMVIQFLYKTITHQDPMATMGDDPHSVYMAWTGVQFAGIAYTNLPHITEELLMHSFQLPFFPIKKKYEQIVEFFRSAGSGLLDLAVTKYGLDREEALHNLVFSFGINTRLGLLKMFPPILFFIARAGAEFQARLKQEIRGRMKKREDAASIQALGDLKLVKATVLEVFRLMPSIFVAFGRARQDLEVESHDARYKIKKGELLGTHQYFVMRDPVVFKDPHSFVPDRFMGSEGAALLPHIVWSNGRETDSPTPTNKQCPGKNQAELIAVQFIAEMFLRYDSWEVTQESSVSATKLDVHLCKLVKRS</sequence>
<accession>D8S724</accession>
<proteinExistence type="evidence at protein level"/>
<gene>
    <name evidence="3" type="primary">CYP74M1</name>
    <name evidence="3" type="synonym">DES1</name>
    <name evidence="6" type="ORF">SELMODRAFT_177485</name>
</gene>
<feature type="chain" id="PRO_0000462248" description="Divinyl ether synthase CYP74M1">
    <location>
        <begin position="1"/>
        <end position="475"/>
    </location>
</feature>
<feature type="binding site" description="axial binding residue" evidence="1">
    <location>
        <position position="427"/>
    </location>
    <ligand>
        <name>heme</name>
        <dbReference type="ChEBI" id="CHEBI:30413"/>
    </ligand>
    <ligandPart>
        <name>Fe</name>
        <dbReference type="ChEBI" id="CHEBI:18248"/>
    </ligandPart>
</feature>